<organismHost>
    <name type="scientific">Homo sapiens</name>
    <name type="common">Human</name>
    <dbReference type="NCBI Taxonomy" id="9606"/>
</organismHost>
<reference key="1">
    <citation type="journal article" date="2006" name="Virology">
        <title>The genome of Epstein-Barr virus type 2 strain AG876.</title>
        <authorList>
            <person name="Dolan A."/>
            <person name="Addison C."/>
            <person name="Gatherer D."/>
            <person name="Davison A.J."/>
            <person name="McGeoch D.J."/>
        </authorList>
    </citation>
    <scope>NUCLEOTIDE SEQUENCE [LARGE SCALE GENOMIC DNA]</scope>
</reference>
<feature type="chain" id="PRO_0000375925" description="DNA polymerase catalytic subunit">
    <location>
        <begin position="1"/>
        <end position="1015"/>
    </location>
</feature>
<evidence type="ECO:0000250" key="1"/>
<evidence type="ECO:0000305" key="2"/>
<accession>Q1HVC1</accession>
<protein>
    <recommendedName>
        <fullName>DNA polymerase catalytic subunit</fullName>
        <ecNumber>2.7.7.7</ecNumber>
    </recommendedName>
</protein>
<proteinExistence type="inferred from homology"/>
<comment type="function">
    <text evidence="1">Replicates viral genomic DNA in the late phase of lytic infection, producing long concatemeric DNA. The replication complex is composed of six viral proteins: the DNA polymerase, processivity factor, primase, primase-associated factor, helicase, and ssDNA-binding protein (By similarity).</text>
</comment>
<comment type="catalytic activity">
    <reaction>
        <text>DNA(n) + a 2'-deoxyribonucleoside 5'-triphosphate = DNA(n+1) + diphosphate</text>
        <dbReference type="Rhea" id="RHEA:22508"/>
        <dbReference type="Rhea" id="RHEA-COMP:17339"/>
        <dbReference type="Rhea" id="RHEA-COMP:17340"/>
        <dbReference type="ChEBI" id="CHEBI:33019"/>
        <dbReference type="ChEBI" id="CHEBI:61560"/>
        <dbReference type="ChEBI" id="CHEBI:173112"/>
        <dbReference type="EC" id="2.7.7.7"/>
    </reaction>
</comment>
<comment type="subunit">
    <text evidence="1">Forms a complex with the major DNA-binding protein BALF2, the DNA polymerase processivity factor BMRF1, and the alkaline exonuclease BGLF5. Interacts with the putative helicase-primase complex composed of BBLF4, BSLF1 and BBLF2/3 proteins; these interactions may coordinate leading and lagging strand DNA synthesis at the replication fork (By similarity).</text>
</comment>
<comment type="subcellular location">
    <subcellularLocation>
        <location>Host nucleus</location>
    </subcellularLocation>
    <text evidence="1">the protein is present at discrete sites in nuclei, called replication compartments where viral DNA replication occurs.</text>
</comment>
<comment type="similarity">
    <text evidence="2">Belongs to the DNA polymerase type-B family.</text>
</comment>
<name>DPOL_EBVA8</name>
<dbReference type="EC" id="2.7.7.7"/>
<dbReference type="EMBL" id="DQ279927">
    <property type="protein sequence ID" value="ABB89286.1"/>
    <property type="molecule type" value="Genomic_DNA"/>
</dbReference>
<dbReference type="RefSeq" id="YP_001129507.1">
    <property type="nucleotide sequence ID" value="NC_009334.1"/>
</dbReference>
<dbReference type="SMR" id="Q1HVC1"/>
<dbReference type="IntAct" id="Q1HVC1">
    <property type="interactions" value="5"/>
</dbReference>
<dbReference type="MINT" id="Q1HVC1"/>
<dbReference type="KEGG" id="vg:5176180"/>
<dbReference type="Proteomes" id="UP000007639">
    <property type="component" value="Genome"/>
</dbReference>
<dbReference type="GO" id="GO:0042025">
    <property type="term" value="C:host cell nucleus"/>
    <property type="evidence" value="ECO:0007669"/>
    <property type="project" value="UniProtKB-SubCell"/>
</dbReference>
<dbReference type="GO" id="GO:0008296">
    <property type="term" value="F:3'-5'-DNA exonuclease activity"/>
    <property type="evidence" value="ECO:0007669"/>
    <property type="project" value="TreeGrafter"/>
</dbReference>
<dbReference type="GO" id="GO:0003677">
    <property type="term" value="F:DNA binding"/>
    <property type="evidence" value="ECO:0007669"/>
    <property type="project" value="UniProtKB-KW"/>
</dbReference>
<dbReference type="GO" id="GO:0003887">
    <property type="term" value="F:DNA-directed DNA polymerase activity"/>
    <property type="evidence" value="ECO:0007669"/>
    <property type="project" value="UniProtKB-KW"/>
</dbReference>
<dbReference type="GO" id="GO:0000166">
    <property type="term" value="F:nucleotide binding"/>
    <property type="evidence" value="ECO:0007669"/>
    <property type="project" value="InterPro"/>
</dbReference>
<dbReference type="GO" id="GO:0006287">
    <property type="term" value="P:base-excision repair, gap-filling"/>
    <property type="evidence" value="ECO:0007669"/>
    <property type="project" value="TreeGrafter"/>
</dbReference>
<dbReference type="GO" id="GO:0045004">
    <property type="term" value="P:DNA replication proofreading"/>
    <property type="evidence" value="ECO:0007669"/>
    <property type="project" value="TreeGrafter"/>
</dbReference>
<dbReference type="GO" id="GO:0006297">
    <property type="term" value="P:nucleotide-excision repair, DNA gap filling"/>
    <property type="evidence" value="ECO:0007669"/>
    <property type="project" value="TreeGrafter"/>
</dbReference>
<dbReference type="GO" id="GO:0039693">
    <property type="term" value="P:viral DNA genome replication"/>
    <property type="evidence" value="ECO:0007669"/>
    <property type="project" value="UniProtKB-KW"/>
</dbReference>
<dbReference type="FunFam" id="1.10.287.690:FF:000006">
    <property type="entry name" value="DNA polymerase"/>
    <property type="match status" value="1"/>
</dbReference>
<dbReference type="FunFam" id="3.30.420.10:FF:000004">
    <property type="entry name" value="DNA polymerase"/>
    <property type="match status" value="1"/>
</dbReference>
<dbReference type="FunFam" id="1.10.132.60:FF:000011">
    <property type="entry name" value="DNA polymerase catalytic subunit"/>
    <property type="match status" value="1"/>
</dbReference>
<dbReference type="FunFam" id="3.30.342.10:FF:000026">
    <property type="entry name" value="DNA polymerase catalytic subunit"/>
    <property type="match status" value="1"/>
</dbReference>
<dbReference type="Gene3D" id="1.10.132.60">
    <property type="entry name" value="DNA polymerase family B, C-terminal domain"/>
    <property type="match status" value="1"/>
</dbReference>
<dbReference type="Gene3D" id="3.30.342.10">
    <property type="entry name" value="DNA Polymerase, chain B, domain 1"/>
    <property type="match status" value="1"/>
</dbReference>
<dbReference type="Gene3D" id="1.10.287.690">
    <property type="entry name" value="Helix hairpin bin"/>
    <property type="match status" value="1"/>
</dbReference>
<dbReference type="Gene3D" id="3.90.1600.10">
    <property type="entry name" value="Palm domain of DNA polymerase"/>
    <property type="match status" value="1"/>
</dbReference>
<dbReference type="Gene3D" id="3.30.420.10">
    <property type="entry name" value="Ribonuclease H-like superfamily/Ribonuclease H"/>
    <property type="match status" value="1"/>
</dbReference>
<dbReference type="InterPro" id="IPR006172">
    <property type="entry name" value="DNA-dir_DNA_pol_B"/>
</dbReference>
<dbReference type="InterPro" id="IPR017964">
    <property type="entry name" value="DNA-dir_DNA_pol_B_CS"/>
</dbReference>
<dbReference type="InterPro" id="IPR006133">
    <property type="entry name" value="DNA-dir_DNA_pol_B_exonuc"/>
</dbReference>
<dbReference type="InterPro" id="IPR006134">
    <property type="entry name" value="DNA-dir_DNA_pol_B_multi_dom"/>
</dbReference>
<dbReference type="InterPro" id="IPR043502">
    <property type="entry name" value="DNA/RNA_pol_sf"/>
</dbReference>
<dbReference type="InterPro" id="IPR042087">
    <property type="entry name" value="DNA_pol_B_thumb"/>
</dbReference>
<dbReference type="InterPro" id="IPR023211">
    <property type="entry name" value="DNA_pol_palm_dom_sf"/>
</dbReference>
<dbReference type="InterPro" id="IPR050240">
    <property type="entry name" value="DNA_pol_type-B"/>
</dbReference>
<dbReference type="InterPro" id="IPR012337">
    <property type="entry name" value="RNaseH-like_sf"/>
</dbReference>
<dbReference type="InterPro" id="IPR036397">
    <property type="entry name" value="RNaseH_sf"/>
</dbReference>
<dbReference type="PANTHER" id="PTHR10322">
    <property type="entry name" value="DNA POLYMERASE CATALYTIC SUBUNIT"/>
    <property type="match status" value="1"/>
</dbReference>
<dbReference type="PANTHER" id="PTHR10322:SF23">
    <property type="entry name" value="DNA POLYMERASE DELTA CATALYTIC SUBUNIT"/>
    <property type="match status" value="1"/>
</dbReference>
<dbReference type="Pfam" id="PF00136">
    <property type="entry name" value="DNA_pol_B"/>
    <property type="match status" value="1"/>
</dbReference>
<dbReference type="Pfam" id="PF03104">
    <property type="entry name" value="DNA_pol_B_exo1"/>
    <property type="match status" value="1"/>
</dbReference>
<dbReference type="PRINTS" id="PR00106">
    <property type="entry name" value="DNAPOLB"/>
</dbReference>
<dbReference type="SMART" id="SM00486">
    <property type="entry name" value="POLBc"/>
    <property type="match status" value="1"/>
</dbReference>
<dbReference type="SUPFAM" id="SSF56672">
    <property type="entry name" value="DNA/RNA polymerases"/>
    <property type="match status" value="1"/>
</dbReference>
<dbReference type="SUPFAM" id="SSF53098">
    <property type="entry name" value="Ribonuclease H-like"/>
    <property type="match status" value="1"/>
</dbReference>
<dbReference type="PROSITE" id="PS00116">
    <property type="entry name" value="DNA_POLYMERASE_B"/>
    <property type="match status" value="1"/>
</dbReference>
<sequence>MSGGLFYNPFLRPNKGLLKKPDKEYLRLIPKCFQTPGAAGVVDVRGPQPPLCFYQDSLTVVGGDEDGKGMWWRQRAQEGTARPEADTHGSPLDFHVYDILETVYTHEKCAVIPSDKQGYVVPCGIVIKLLGRRKADGASVCVNVFGQQAYFYASAPQGLDVEFAVLSALKASTFDRRTPCRVSVEKVTRRSIMGYGNHAGDYHKITLSHPNSVCHVATWLQDKHGCRIFEANVDATRRFVLDNDFVTFGWYSCRRAIPRLQHRDSYAELEYDCEVGDLSVRREDSSWPSYQALAFDIECLGEEGFPTATNEADLILQISCVLWSTGEEAGRYRRILLTLGTCEDIEGVEVYEFPSELDMLYAFFQLIRDLSVEIVTGYNVANFDWPYILDRARHIYSINPASLGKIRAGGVCEVRRPHDAGKGFLRANTKVRITGLIPIDMYAVCRDKLSLSDYKLDTVARHLLGAKKEDVHYKEIPRLFAAGPEGRRRLGMYCVQDSALVMDLLNHFVIHVEVAEIAKIAHIPCRRVLDDGQQIRVFSCLLAAAQKENFILPMPSASDRDGYQGATVIQPLSGFYNSPVLVVDFASLYPSIIQAHNLCYSTMITPGEEHRLAGLRPGEDYESFRLTGGVYHFVKKHVHESFLASLLTSWLAKRKAIKKLLAACEDPRQRTILDKQQLAIKCTCNAVYGFTGVANGLFPCLSIAETVTLQGRTMLERAKAFVEALSPANLQALAPSPDAWAPLNPEGQLRVIYGDTDSLFIECRGFSESETLRFAEALAAHTTRSLFVAPISLEAEKTFSCLMLITKKRYVGVLTDGKTLMKGVELVRKTACKFVQTRCRRVLDLVLADARVKEAASLLSHRPFQESFTQGLPVGFLPVIDILNQAYTDLREGRVPMGELCFSTELSRKLSAYKSTQMPHLAVYQKFVERNEELPQIHDRIQYVFVEPKGGVKGARKTEMAEDPAYAERHGVPVAVDHYFDKLLQGAANILQCLFDNNSGAALSVLQNFTARPPF</sequence>
<organism>
    <name type="scientific">Epstein-Barr virus (strain AG876)</name>
    <name type="common">HHV-4</name>
    <name type="synonym">Human herpesvirus 4</name>
    <dbReference type="NCBI Taxonomy" id="82830"/>
    <lineage>
        <taxon>Viruses</taxon>
        <taxon>Duplodnaviria</taxon>
        <taxon>Heunggongvirae</taxon>
        <taxon>Peploviricota</taxon>
        <taxon>Herviviricetes</taxon>
        <taxon>Herpesvirales</taxon>
        <taxon>Orthoherpesviridae</taxon>
        <taxon>Gammaherpesvirinae</taxon>
        <taxon>Lymphocryptovirus</taxon>
        <taxon>Lymphocryptovirus humangamma4</taxon>
        <taxon>Epstein-Barr virus (strain GD1)</taxon>
    </lineage>
</organism>
<gene>
    <name type="ORF">BALF5</name>
</gene>
<keyword id="KW-0235">DNA replication</keyword>
<keyword id="KW-0238">DNA-binding</keyword>
<keyword id="KW-0239">DNA-directed DNA polymerase</keyword>
<keyword id="KW-1048">Host nucleus</keyword>
<keyword id="KW-0548">Nucleotidyltransferase</keyword>
<keyword id="KW-1185">Reference proteome</keyword>
<keyword id="KW-0808">Transferase</keyword>
<keyword id="KW-1194">Viral DNA replication</keyword>